<comment type="function">
    <text evidence="1 9">Polyketide synthase; part of the Pks1 gene cluster that mediates the biosynthesis of an anthraquinone derivative pigment that contributes to conidial pigmentation that provides protection from UV radiation, heat and cold stress (PubMed:29958281). The polyketide synthase Pks1 produces 1-acetyl-2,4,6,8-tetrahydroxy-9,10-anthraquinone though condensation of acetyl-CoA with malonyl-CoA (By similarity). The dehydratase EthD and the laccase Mlac1 further convert the anthraquinone derivative into the final conidial pigment (By similarity).</text>
</comment>
<comment type="induction">
    <text evidence="1 9">Highly expressed during conidiation (PubMed:29958281). A conserved conidiation regulatory pathway containing BrlA, AbaA and WetA regulates expression. During conidiation BlrA up-regulates AbaA, which in turn controls WetA. Moreover, the Hog1 MAPK regulates fungal conidiation by controlling the conidiation regulatory pathway, and that all three pigmentation genes Pks1, EthD and Mlac1 exercise feedback regulation of conidiation (By similarity).</text>
</comment>
<comment type="domain">
    <text evidence="11">Multidomain protein; including a starter unit:ACP transacylase (SAT) that selects the starter unit; a ketosynthase (KS) that catalyzes repeated decarboxylative condensation to elongate the polyketide backbone; a malonyl-CoA:ACP transacylase (MAT) that selects and transfers the extender unit malonyl-CoA; a product template (PT) domain that controls the immediate cyclization regioselectivity of the reactive polyketide backbone; and an acyl-carrier protein (ACP) that serves as the tether of the growing and completed polyketide via its phosphopantetheinyl arm.</text>
</comment>
<comment type="domain">
    <text evidence="11">The release of the polyketide chain from the non-reducing polyketide synthase is mediated by the thioesterase (TE) domain localized at the C-ter of the protein.</text>
</comment>
<comment type="disruption phenotype">
    <text evidence="9">Results in red conidia.</text>
</comment>
<name>PKS1_METGA</name>
<feature type="chain" id="PRO_0000445744" description="Polyketide synthase 1">
    <location>
        <begin position="1"/>
        <end position="2148"/>
    </location>
</feature>
<feature type="domain" description="Ketosynthase family 3 (KS3)" evidence="5 11">
    <location>
        <begin position="394"/>
        <end position="829"/>
    </location>
</feature>
<feature type="domain" description="PKS/mFAS DH" evidence="6">
    <location>
        <begin position="1314"/>
        <end position="1619"/>
    </location>
</feature>
<feature type="domain" description="Carrier 1" evidence="4 11">
    <location>
        <begin position="1678"/>
        <end position="1752"/>
    </location>
</feature>
<feature type="domain" description="Carrier 2" evidence="4 11">
    <location>
        <begin position="1793"/>
        <end position="1870"/>
    </location>
</feature>
<feature type="region of interest" description="N-terminal acylcarrier protein transacylase domain (SAT)" evidence="3 11">
    <location>
        <begin position="19"/>
        <end position="261"/>
    </location>
</feature>
<feature type="region of interest" description="Malonyl-CoA:ACP transacylase (MAT) domain" evidence="3 11">
    <location>
        <begin position="929"/>
        <end position="1233"/>
    </location>
</feature>
<feature type="region of interest" description="Product template (PT) domain" evidence="3 11">
    <location>
        <begin position="1310"/>
        <end position="1624"/>
    </location>
</feature>
<feature type="region of interest" description="N-terminal hotdog fold" evidence="6">
    <location>
        <begin position="1314"/>
        <end position="1447"/>
    </location>
</feature>
<feature type="region of interest" description="C-terminal hotdog fold" evidence="6">
    <location>
        <begin position="1474"/>
        <end position="1619"/>
    </location>
</feature>
<feature type="region of interest" description="Disordered" evidence="8">
    <location>
        <begin position="1619"/>
        <end position="1657"/>
    </location>
</feature>
<feature type="region of interest" description="Disordered" evidence="8">
    <location>
        <begin position="1755"/>
        <end position="1796"/>
    </location>
</feature>
<feature type="region of interest" description="Thioesterase (TE) domain" evidence="3 11">
    <location>
        <begin position="1882"/>
        <end position="2146"/>
    </location>
</feature>
<feature type="compositionally biased region" description="Low complexity" evidence="8">
    <location>
        <begin position="1635"/>
        <end position="1650"/>
    </location>
</feature>
<feature type="compositionally biased region" description="Low complexity" evidence="8">
    <location>
        <begin position="1755"/>
        <end position="1790"/>
    </location>
</feature>
<feature type="active site" description="For beta-ketoacyl synthase activity" evidence="5">
    <location>
        <position position="566"/>
    </location>
</feature>
<feature type="active site" description="For beta-ketoacyl synthase activity" evidence="5">
    <location>
        <position position="701"/>
    </location>
</feature>
<feature type="active site" description="For beta-ketoacyl synthase activity" evidence="5">
    <location>
        <position position="745"/>
    </location>
</feature>
<feature type="active site" description="For acyl/malonyl transferase activity" evidence="7">
    <location>
        <position position="1018"/>
    </location>
</feature>
<feature type="active site" description="Proton acceptor; for dehydratase activity" evidence="6">
    <location>
        <position position="1346"/>
    </location>
</feature>
<feature type="active site" description="Proton donor; for dehydratase activity" evidence="6">
    <location>
        <position position="1533"/>
    </location>
</feature>
<feature type="active site" description="For thioesterase activity" evidence="2">
    <location>
        <position position="1973"/>
    </location>
</feature>
<feature type="modified residue" description="O-(pantetheine 4'-phosphoryl)serine" evidence="4">
    <location>
        <position position="1712"/>
    </location>
</feature>
<feature type="modified residue" description="O-(pantetheine 4'-phosphoryl)serine" evidence="4">
    <location>
        <position position="1830"/>
    </location>
</feature>
<sequence>MNHVTIKQSDTRADPFRVFIFGDQSSCNLSNLQLLLFKKSNVYLASFIDQVNLTLRHEIARLTAAERQSFPAFSSIQNLVARALKKDTSVALESTLATIYHLCCFLNYFGDGQEAYPTGPTTHVSGLCIGALAAAAVSSSKSLAELVQAGIDAVRVSLKVGLLVARTAALFSHQESNGASSSPWSYAVPDSQLPLALAEEAIESYQAKTNIPPLSLPYISAKGQNSWTVSGPPAIVQHFLQTSQFEKTLRLTPLAVHAPYHAPHIFSAVDVQHIMHAVGTVSNFSSKLSFISSSSSRNLPTGLKFQDLLYRAVEDILILPLDLREAAENIRLVLEATDNVQQCALFPISTGVCPSLKQSFSPAMASRVSIVDCIMERATADAGPKSTSGPKPSESKIAIIGMSGRFPESADVEAFWDLLHQGLDVHRPVPPDRYNGELYYDVTGKRKNTCKVMHGCWINDPGLFDAKFFNISPKEAEQSDPGQRLALATAYEALEAAGVVADRTPSTQRDRVGVFYGMTSDDYREVSCGQNVDTYFIPGGNRAFTPGKINYFFKYCGPSVSVDTACSSSLAAIHLACNSIWRNECDTAIAGGTNVMSNPDSFVGLDRGYFLSRTGNCHTFDDEADGYCRADAVGTVILKRLEDAIADHDPILGVISGALTNHSADAVSITRPHSGAQEEIFSKLLTESGVHPHQVSYIEMHGTGTQAGDATEMTSVLNCFAPSTSPRRLPHESLHLGSTKANVGHSESASGVSALIKVLLMMEKNIIPPHCGIKGKINHKFPTDLDQRNVHIAKTATQWNRRNEFNNIRRAFVNNFSAAGGNTALLVEDYPLLIADSSQQDARTAHVVTVSAKCIKSLKGNLENLKKFVQKQASTDGFLPKLSYTTTARRMHHPFRVAIPAANSEQLLSALDEELKHDSYTCSSESPVAFVFSGQGSQYSAMGQHLLHFTIFRDEVHAYDILAQRHGFPSIMPLIDGSVDIEDLEPLVVQLGTVCVQMALASLWMALGMRPAYVVGHSLGHYAALKVAGVLTASDTIYLVAMRARLLQNKCSRGSHAMLAIRSSAAAIQAHLDEGIHDIACINGPQDTVVSGCIDDIDRLSQKLMDKGIKATRVNVPFAFHSAQVDPILDELEAIASQVEFHTPRVAIGCPLLGRTFKAGETPSIEANHIRRHCRETVNFFDVLRSAKDEGFVSEKTAWIEIGPHTVCSNLVKANINQDIVAVPSLMRNKDGWQVLASSVATLYRHGSSVAWDEYHHDFEACKEVLRLPAYSWDNKLYWIDYVHDWLLTRGDPPVQAAASLPAPPSSFSTASVHRIVHESVDKGKLTLTAECEFTNEQLREVVYGHVVNGNRVCSSSLYTDFGVTLGSYILEKYRPDLQDHAVDVQDMVVNKALVHKEGPTMLLRIDVVLDMTDSKAASMSIYSVNSKGNKTADHAQSSLHFEQPKVWLKSWDSTQYYVERSIEWLKEKADQGLNSRMSSGVIYKLFSSLVDYSTAYKGMQEAIVNTEDFEATALVRFQVDEGNFRCNPMWVDSCGQLAGFLMNGHAKTPKDQVFINHGWQSFRTVRKFSKDKTYRTYVRMRCIEGTTYAGDVYIFDDEGIVGVCGSITFQGIPRKVLNTAMPPPKSQNEAPVRSAPAKPAAKPPKSASSEHSGHFARHSNIEPLKLDAALKSATTARNPMLAVFKIVSEEIGIPSASVDNGLVFADYGVDSLLSLSISGRLREELDLDVESSAFETCATLADLATHLGLDTFSSDQSSGQSSSSGGLSPRSDSIGEITSSATTPPSLSPRGSVSGSQCKDVCAILAEEIGVSMSEITNDTDLGALGMDSLMSLAVLSRLREELELDLEGDFFVSHPNFSSFKHMFQQGHGDEVEPEPSAELKQYRATSTLLQGNPKSALYTLFLLPDGSGSSFSYAPINAVRKDVCVFGLNCPWLKSAEKLVQFGLKGLATLYVEEIRRRAPHGPYNLGGWSAGGICAYEAAIQFTREGETVERLILLDSPNPIGLEKLPARLFDFVNGLGLFGDGKAPDWLLAHFLAFIDALDEWKPVPWDKALGGNSPPPRTYILWAEDGICKGTDARPEYRDDDPREMKWLLENRTNFGGNNWDVLLGQQSLSIERIQDANHFTMLRKGKNSERVAAFIRSTFG</sequence>
<accession>A0A0B4G9F9</accession>
<gene>
    <name evidence="10" type="primary">Pks1</name>
    <name type="ORF">MGU_09383</name>
</gene>
<protein>
    <recommendedName>
        <fullName evidence="10">Polyketide synthase 1</fullName>
        <ecNumber evidence="9">2.3.1.-</ecNumber>
    </recommendedName>
    <alternativeName>
        <fullName evidence="10">Conidial pigment biosynthesis polyketide synthase</fullName>
    </alternativeName>
</protein>
<dbReference type="EC" id="2.3.1.-" evidence="9"/>
<dbReference type="EMBL" id="AZNH01000061">
    <property type="protein sequence ID" value="KID83385.1"/>
    <property type="molecule type" value="Genomic_DNA"/>
</dbReference>
<dbReference type="SMR" id="A0A0B4G9F9"/>
<dbReference type="ESTHER" id="metaq-pks1">
    <property type="family name" value="Thioesterase"/>
</dbReference>
<dbReference type="HOGENOM" id="CLU_000022_6_0_1"/>
<dbReference type="OrthoDB" id="4677at5529"/>
<dbReference type="Proteomes" id="UP000031192">
    <property type="component" value="Unassembled WGS sequence"/>
</dbReference>
<dbReference type="GO" id="GO:0004315">
    <property type="term" value="F:3-oxoacyl-[acyl-carrier-protein] synthase activity"/>
    <property type="evidence" value="ECO:0007669"/>
    <property type="project" value="InterPro"/>
</dbReference>
<dbReference type="GO" id="GO:0004312">
    <property type="term" value="F:fatty acid synthase activity"/>
    <property type="evidence" value="ECO:0007669"/>
    <property type="project" value="TreeGrafter"/>
</dbReference>
<dbReference type="GO" id="GO:0031177">
    <property type="term" value="F:phosphopantetheine binding"/>
    <property type="evidence" value="ECO:0007669"/>
    <property type="project" value="InterPro"/>
</dbReference>
<dbReference type="GO" id="GO:0006633">
    <property type="term" value="P:fatty acid biosynthetic process"/>
    <property type="evidence" value="ECO:0007669"/>
    <property type="project" value="InterPro"/>
</dbReference>
<dbReference type="GO" id="GO:0046189">
    <property type="term" value="P:phenol-containing compound biosynthetic process"/>
    <property type="evidence" value="ECO:0007669"/>
    <property type="project" value="UniProtKB-ARBA"/>
</dbReference>
<dbReference type="GO" id="GO:0030639">
    <property type="term" value="P:polyketide biosynthetic process"/>
    <property type="evidence" value="ECO:0007669"/>
    <property type="project" value="UniProtKB-ARBA"/>
</dbReference>
<dbReference type="GO" id="GO:0009403">
    <property type="term" value="P:toxin biosynthetic process"/>
    <property type="evidence" value="ECO:0007669"/>
    <property type="project" value="UniProtKB-ARBA"/>
</dbReference>
<dbReference type="CDD" id="cd00833">
    <property type="entry name" value="PKS"/>
    <property type="match status" value="1"/>
</dbReference>
<dbReference type="FunFam" id="3.40.366.10:FF:000002">
    <property type="entry name" value="Probable polyketide synthase 2"/>
    <property type="match status" value="1"/>
</dbReference>
<dbReference type="FunFam" id="3.10.129.110:FF:000001">
    <property type="entry name" value="Sterigmatocystin biosynthesis polyketide synthase"/>
    <property type="match status" value="1"/>
</dbReference>
<dbReference type="FunFam" id="3.40.47.10:FF:000031">
    <property type="entry name" value="Sterigmatocystin biosynthesis polyketide synthase"/>
    <property type="match status" value="1"/>
</dbReference>
<dbReference type="FunFam" id="3.40.50.1820:FF:000116">
    <property type="entry name" value="Sterigmatocystin biosynthesis polyketide synthase"/>
    <property type="match status" value="1"/>
</dbReference>
<dbReference type="Gene3D" id="3.30.70.3290">
    <property type="match status" value="1"/>
</dbReference>
<dbReference type="Gene3D" id="3.40.47.10">
    <property type="match status" value="1"/>
</dbReference>
<dbReference type="Gene3D" id="1.10.1200.10">
    <property type="entry name" value="ACP-like"/>
    <property type="match status" value="2"/>
</dbReference>
<dbReference type="Gene3D" id="3.40.50.1820">
    <property type="entry name" value="alpha/beta hydrolase"/>
    <property type="match status" value="1"/>
</dbReference>
<dbReference type="Gene3D" id="3.40.366.10">
    <property type="entry name" value="Malonyl-Coenzyme A Acyl Carrier Protein, domain 2"/>
    <property type="match status" value="2"/>
</dbReference>
<dbReference type="Gene3D" id="3.10.129.110">
    <property type="entry name" value="Polyketide synthase dehydratase"/>
    <property type="match status" value="1"/>
</dbReference>
<dbReference type="InterPro" id="IPR029058">
    <property type="entry name" value="AB_hydrolase_fold"/>
</dbReference>
<dbReference type="InterPro" id="IPR001227">
    <property type="entry name" value="Ac_transferase_dom_sf"/>
</dbReference>
<dbReference type="InterPro" id="IPR036736">
    <property type="entry name" value="ACP-like_sf"/>
</dbReference>
<dbReference type="InterPro" id="IPR014043">
    <property type="entry name" value="Acyl_transferase_dom"/>
</dbReference>
<dbReference type="InterPro" id="IPR016035">
    <property type="entry name" value="Acyl_Trfase/lysoPLipase"/>
</dbReference>
<dbReference type="InterPro" id="IPR018201">
    <property type="entry name" value="Ketoacyl_synth_AS"/>
</dbReference>
<dbReference type="InterPro" id="IPR014031">
    <property type="entry name" value="Ketoacyl_synth_C"/>
</dbReference>
<dbReference type="InterPro" id="IPR014030">
    <property type="entry name" value="Ketoacyl_synth_N"/>
</dbReference>
<dbReference type="InterPro" id="IPR016036">
    <property type="entry name" value="Malonyl_transacylase_ACP-bd"/>
</dbReference>
<dbReference type="InterPro" id="IPR020841">
    <property type="entry name" value="PKS_Beta-ketoAc_synthase_dom"/>
</dbReference>
<dbReference type="InterPro" id="IPR042104">
    <property type="entry name" value="PKS_dehydratase_sf"/>
</dbReference>
<dbReference type="InterPro" id="IPR049551">
    <property type="entry name" value="PKS_DH_C"/>
</dbReference>
<dbReference type="InterPro" id="IPR049900">
    <property type="entry name" value="PKS_mFAS_DH"/>
</dbReference>
<dbReference type="InterPro" id="IPR050091">
    <property type="entry name" value="PKS_NRPS_Biosynth_Enz"/>
</dbReference>
<dbReference type="InterPro" id="IPR020806">
    <property type="entry name" value="PKS_PP-bd"/>
</dbReference>
<dbReference type="InterPro" id="IPR009081">
    <property type="entry name" value="PP-bd_ACP"/>
</dbReference>
<dbReference type="InterPro" id="IPR006162">
    <property type="entry name" value="Ppantetheine_attach_site"/>
</dbReference>
<dbReference type="InterPro" id="IPR030918">
    <property type="entry name" value="PT_fungal_PKS"/>
</dbReference>
<dbReference type="InterPro" id="IPR032088">
    <property type="entry name" value="SAT"/>
</dbReference>
<dbReference type="InterPro" id="IPR001031">
    <property type="entry name" value="Thioesterase"/>
</dbReference>
<dbReference type="InterPro" id="IPR016039">
    <property type="entry name" value="Thiolase-like"/>
</dbReference>
<dbReference type="NCBIfam" id="TIGR04532">
    <property type="entry name" value="PT_fungal_PKS"/>
    <property type="match status" value="1"/>
</dbReference>
<dbReference type="PANTHER" id="PTHR43775:SF45">
    <property type="entry name" value="CONIDIAL PIGMENT POLYKETIDE SYNTHASE ALB1"/>
    <property type="match status" value="1"/>
</dbReference>
<dbReference type="PANTHER" id="PTHR43775">
    <property type="entry name" value="FATTY ACID SYNTHASE"/>
    <property type="match status" value="1"/>
</dbReference>
<dbReference type="Pfam" id="PF00698">
    <property type="entry name" value="Acyl_transf_1"/>
    <property type="match status" value="1"/>
</dbReference>
<dbReference type="Pfam" id="PF22621">
    <property type="entry name" value="CurL-like_PKS_C"/>
    <property type="match status" value="1"/>
</dbReference>
<dbReference type="Pfam" id="PF00109">
    <property type="entry name" value="ketoacyl-synt"/>
    <property type="match status" value="1"/>
</dbReference>
<dbReference type="Pfam" id="PF02801">
    <property type="entry name" value="Ketoacyl-synt_C"/>
    <property type="match status" value="1"/>
</dbReference>
<dbReference type="Pfam" id="PF00550">
    <property type="entry name" value="PP-binding"/>
    <property type="match status" value="2"/>
</dbReference>
<dbReference type="Pfam" id="PF14765">
    <property type="entry name" value="PS-DH"/>
    <property type="match status" value="1"/>
</dbReference>
<dbReference type="Pfam" id="PF16073">
    <property type="entry name" value="SAT"/>
    <property type="match status" value="1"/>
</dbReference>
<dbReference type="Pfam" id="PF00975">
    <property type="entry name" value="Thioesterase"/>
    <property type="match status" value="1"/>
</dbReference>
<dbReference type="SMART" id="SM00827">
    <property type="entry name" value="PKS_AT"/>
    <property type="match status" value="1"/>
</dbReference>
<dbReference type="SMART" id="SM00825">
    <property type="entry name" value="PKS_KS"/>
    <property type="match status" value="1"/>
</dbReference>
<dbReference type="SMART" id="SM00823">
    <property type="entry name" value="PKS_PP"/>
    <property type="match status" value="2"/>
</dbReference>
<dbReference type="SUPFAM" id="SSF47336">
    <property type="entry name" value="ACP-like"/>
    <property type="match status" value="2"/>
</dbReference>
<dbReference type="SUPFAM" id="SSF53474">
    <property type="entry name" value="alpha/beta-Hydrolases"/>
    <property type="match status" value="1"/>
</dbReference>
<dbReference type="SUPFAM" id="SSF52151">
    <property type="entry name" value="FabD/lysophospholipase-like"/>
    <property type="match status" value="1"/>
</dbReference>
<dbReference type="SUPFAM" id="SSF55048">
    <property type="entry name" value="Probable ACP-binding domain of malonyl-CoA ACP transacylase"/>
    <property type="match status" value="1"/>
</dbReference>
<dbReference type="SUPFAM" id="SSF53901">
    <property type="entry name" value="Thiolase-like"/>
    <property type="match status" value="1"/>
</dbReference>
<dbReference type="PROSITE" id="PS50075">
    <property type="entry name" value="CARRIER"/>
    <property type="match status" value="2"/>
</dbReference>
<dbReference type="PROSITE" id="PS00606">
    <property type="entry name" value="KS3_1"/>
    <property type="match status" value="1"/>
</dbReference>
<dbReference type="PROSITE" id="PS52004">
    <property type="entry name" value="KS3_2"/>
    <property type="match status" value="1"/>
</dbReference>
<dbReference type="PROSITE" id="PS00012">
    <property type="entry name" value="PHOSPHOPANTETHEINE"/>
    <property type="match status" value="1"/>
</dbReference>
<dbReference type="PROSITE" id="PS52019">
    <property type="entry name" value="PKS_MFAS_DH"/>
    <property type="match status" value="1"/>
</dbReference>
<proteinExistence type="evidence at protein level"/>
<organism>
    <name type="scientific">Metarhizium guizhouense (strain ARSEF 977)</name>
    <dbReference type="NCBI Taxonomy" id="1276136"/>
    <lineage>
        <taxon>Eukaryota</taxon>
        <taxon>Fungi</taxon>
        <taxon>Dikarya</taxon>
        <taxon>Ascomycota</taxon>
        <taxon>Pezizomycotina</taxon>
        <taxon>Sordariomycetes</taxon>
        <taxon>Hypocreomycetidae</taxon>
        <taxon>Hypocreales</taxon>
        <taxon>Clavicipitaceae</taxon>
        <taxon>Metarhizium</taxon>
    </lineage>
</organism>
<keyword id="KW-0511">Multifunctional enzyme</keyword>
<keyword id="KW-0596">Phosphopantetheine</keyword>
<keyword id="KW-0597">Phosphoprotein</keyword>
<keyword id="KW-0677">Repeat</keyword>
<keyword id="KW-0808">Transferase</keyword>
<evidence type="ECO:0000250" key="1">
    <source>
        <dbReference type="UniProtKB" id="E9F646"/>
    </source>
</evidence>
<evidence type="ECO:0000250" key="2">
    <source>
        <dbReference type="UniProtKB" id="Q03149"/>
    </source>
</evidence>
<evidence type="ECO:0000255" key="3"/>
<evidence type="ECO:0000255" key="4">
    <source>
        <dbReference type="PROSITE-ProRule" id="PRU00258"/>
    </source>
</evidence>
<evidence type="ECO:0000255" key="5">
    <source>
        <dbReference type="PROSITE-ProRule" id="PRU01348"/>
    </source>
</evidence>
<evidence type="ECO:0000255" key="6">
    <source>
        <dbReference type="PROSITE-ProRule" id="PRU01363"/>
    </source>
</evidence>
<evidence type="ECO:0000255" key="7">
    <source>
        <dbReference type="PROSITE-ProRule" id="PRU10022"/>
    </source>
</evidence>
<evidence type="ECO:0000256" key="8">
    <source>
        <dbReference type="SAM" id="MobiDB-lite"/>
    </source>
</evidence>
<evidence type="ECO:0000269" key="9">
    <source>
    </source>
</evidence>
<evidence type="ECO:0000303" key="10">
    <source>
    </source>
</evidence>
<evidence type="ECO:0000305" key="11">
    <source>
    </source>
</evidence>
<reference key="1">
    <citation type="journal article" date="2014" name="Proc. Natl. Acad. Sci. U.S.A.">
        <title>Trajectory and genomic determinants of fungal-pathogen speciation and host adaptation.</title>
        <authorList>
            <person name="Hu X."/>
            <person name="Xiao G."/>
            <person name="Zheng P."/>
            <person name="Shang Y."/>
            <person name="Su Y."/>
            <person name="Zhang X."/>
            <person name="Liu X."/>
            <person name="Zhan S."/>
            <person name="St Leger R.J."/>
            <person name="Wang C."/>
        </authorList>
    </citation>
    <scope>NUCLEOTIDE SEQUENCE [LARGE SCALE GENOMIC DNA]</scope>
    <source>
        <strain>ARSEF 977</strain>
    </source>
</reference>
<reference key="2">
    <citation type="journal article" date="2018" name="PLoS Genet.">
        <title>Duplication of a Pks gene cluster and subsequent functional diversification facilitate environmental adaptation in Metarhizium species.</title>
        <authorList>
            <person name="Zeng G."/>
            <person name="Zhang P."/>
            <person name="Zhang Q."/>
            <person name="Zhao H."/>
            <person name="Li Z."/>
            <person name="Zhang X."/>
            <person name="Wang C."/>
            <person name="Yin W.B."/>
            <person name="Fang W."/>
        </authorList>
    </citation>
    <scope>IDENTIFICATION</scope>
    <scope>DISRUPTION PHENOTYPE</scope>
    <scope>FUNCTION</scope>
    <scope>CATALYTIC ACTIVITY</scope>
    <scope>INDUCTION</scope>
    <scope>DOMAIN</scope>
</reference>